<sequence>MPDSTRVATVYPPGYETWGEKFQRKFKENPWVPLGCLATCGALLMSAVKMRQGRSKEMNYWMRARVGLQGLTLVALVAGSMALKAAKEKAELEAANAPELTQEQIRQLEKEKEEFEMRLKEAEYSHAQEMALAAGANVRKAKTAEAAQKSAAVGVEVDTENRPSTPAPSGKSWWKMW</sequence>
<protein>
    <recommendedName>
        <fullName>Respiratory supercomplex factor 1, mitochondrial</fullName>
    </recommendedName>
</protein>
<gene>
    <name type="primary">RCF1</name>
    <name type="synonym">AIM31</name>
    <name type="ORF">CC1G_11439</name>
</gene>
<accession>A8P006</accession>
<proteinExistence type="inferred from homology"/>
<comment type="function">
    <text evidence="1">Cytochrome c oxidase subunit which plays a role in assembly of respiratory supercomplexes.</text>
</comment>
<comment type="subunit">
    <text evidence="1">Associates with the respiratory chain complex III/complex IV supercomplex.</text>
</comment>
<comment type="subcellular location">
    <subcellularLocation>
        <location evidence="3">Mitochondrion membrane</location>
        <topology evidence="3">Multi-pass membrane protein</topology>
    </subcellularLocation>
</comment>
<comment type="similarity">
    <text evidence="5">Belongs to the RCF1 family.</text>
</comment>
<name>RCF1_COPC7</name>
<reference key="1">
    <citation type="journal article" date="2010" name="Proc. Natl. Acad. Sci. U.S.A.">
        <title>Insights into evolution of multicellular fungi from the assembled chromosomes of the mushroom Coprinopsis cinerea (Coprinus cinereus).</title>
        <authorList>
            <person name="Stajich J.E."/>
            <person name="Wilke S.K."/>
            <person name="Ahren D."/>
            <person name="Au C.H."/>
            <person name="Birren B.W."/>
            <person name="Borodovsky M."/>
            <person name="Burns C."/>
            <person name="Canbaeck B."/>
            <person name="Casselton L.A."/>
            <person name="Cheng C.K."/>
            <person name="Deng J."/>
            <person name="Dietrich F.S."/>
            <person name="Fargo D.C."/>
            <person name="Farman M.L."/>
            <person name="Gathman A.C."/>
            <person name="Goldberg J."/>
            <person name="Guigo R."/>
            <person name="Hoegger P.J."/>
            <person name="Hooker J.B."/>
            <person name="Huggins A."/>
            <person name="James T.Y."/>
            <person name="Kamada T."/>
            <person name="Kilaru S."/>
            <person name="Kodira C."/>
            <person name="Kuees U."/>
            <person name="Kupfer D."/>
            <person name="Kwan H.S."/>
            <person name="Lomsadze A."/>
            <person name="Li W."/>
            <person name="Lilly W.W."/>
            <person name="Ma L.-J."/>
            <person name="Mackey A.J."/>
            <person name="Manning G."/>
            <person name="Martin F."/>
            <person name="Muraguchi H."/>
            <person name="Natvig D.O."/>
            <person name="Palmerini H."/>
            <person name="Ramesh M.A."/>
            <person name="Rehmeyer C.J."/>
            <person name="Roe B.A."/>
            <person name="Shenoy N."/>
            <person name="Stanke M."/>
            <person name="Ter-Hovhannisyan V."/>
            <person name="Tunlid A."/>
            <person name="Velagapudi R."/>
            <person name="Vision T.J."/>
            <person name="Zeng Q."/>
            <person name="Zolan M.E."/>
            <person name="Pukkila P.J."/>
        </authorList>
    </citation>
    <scope>NUCLEOTIDE SEQUENCE [LARGE SCALE GENOMIC DNA]</scope>
    <source>
        <strain>Okayama-7 / 130 / ATCC MYA-4618 / FGSC 9003</strain>
    </source>
</reference>
<keyword id="KW-0175">Coiled coil</keyword>
<keyword id="KW-0472">Membrane</keyword>
<keyword id="KW-0496">Mitochondrion</keyword>
<keyword id="KW-1185">Reference proteome</keyword>
<keyword id="KW-0812">Transmembrane</keyword>
<keyword id="KW-1133">Transmembrane helix</keyword>
<organism>
    <name type="scientific">Coprinopsis cinerea (strain Okayama-7 / 130 / ATCC MYA-4618 / FGSC 9003)</name>
    <name type="common">Inky cap fungus</name>
    <name type="synonym">Hormographiella aspergillata</name>
    <dbReference type="NCBI Taxonomy" id="240176"/>
    <lineage>
        <taxon>Eukaryota</taxon>
        <taxon>Fungi</taxon>
        <taxon>Dikarya</taxon>
        <taxon>Basidiomycota</taxon>
        <taxon>Agaricomycotina</taxon>
        <taxon>Agaricomycetes</taxon>
        <taxon>Agaricomycetidae</taxon>
        <taxon>Agaricales</taxon>
        <taxon>Agaricineae</taxon>
        <taxon>Psathyrellaceae</taxon>
        <taxon>Coprinopsis</taxon>
    </lineage>
</organism>
<feature type="chain" id="PRO_0000399631" description="Respiratory supercomplex factor 1, mitochondrial">
    <location>
        <begin position="1"/>
        <end position="177"/>
    </location>
</feature>
<feature type="transmembrane region" description="Helical" evidence="3">
    <location>
        <begin position="31"/>
        <end position="48"/>
    </location>
</feature>
<feature type="transmembrane region" description="Helical" evidence="3">
    <location>
        <begin position="61"/>
        <end position="83"/>
    </location>
</feature>
<feature type="domain" description="HIG1" evidence="3">
    <location>
        <begin position="3"/>
        <end position="94"/>
    </location>
</feature>
<feature type="region of interest" description="Disordered" evidence="4">
    <location>
        <begin position="150"/>
        <end position="177"/>
    </location>
</feature>
<feature type="coiled-coil region" evidence="2">
    <location>
        <begin position="83"/>
        <end position="129"/>
    </location>
</feature>
<dbReference type="EMBL" id="AACS02000006">
    <property type="protein sequence ID" value="EAU84001.1"/>
    <property type="molecule type" value="Genomic_DNA"/>
</dbReference>
<dbReference type="RefSeq" id="XP_001837794.1">
    <property type="nucleotide sequence ID" value="XM_001837742.1"/>
</dbReference>
<dbReference type="STRING" id="240176.A8P006"/>
<dbReference type="GeneID" id="6014354"/>
<dbReference type="KEGG" id="cci:CC1G_11439"/>
<dbReference type="VEuPathDB" id="FungiDB:CC1G_11439"/>
<dbReference type="eggNOG" id="KOG4431">
    <property type="taxonomic scope" value="Eukaryota"/>
</dbReference>
<dbReference type="HOGENOM" id="CLU_087356_3_0_1"/>
<dbReference type="InParanoid" id="A8P006"/>
<dbReference type="OMA" id="FMASVRM"/>
<dbReference type="OrthoDB" id="6604018at2759"/>
<dbReference type="Proteomes" id="UP000001861">
    <property type="component" value="Unassembled WGS sequence"/>
</dbReference>
<dbReference type="GO" id="GO:0031966">
    <property type="term" value="C:mitochondrial membrane"/>
    <property type="evidence" value="ECO:0007669"/>
    <property type="project" value="UniProtKB-SubCell"/>
</dbReference>
<dbReference type="GO" id="GO:0097250">
    <property type="term" value="P:mitochondrial respirasome assembly"/>
    <property type="evidence" value="ECO:0007669"/>
    <property type="project" value="TreeGrafter"/>
</dbReference>
<dbReference type="Gene3D" id="6.10.140.1320">
    <property type="match status" value="1"/>
</dbReference>
<dbReference type="InterPro" id="IPR007667">
    <property type="entry name" value="Hypoxia_induced_domain"/>
</dbReference>
<dbReference type="InterPro" id="IPR050355">
    <property type="entry name" value="RCF1"/>
</dbReference>
<dbReference type="PANTHER" id="PTHR12297:SF3">
    <property type="entry name" value="HIG1 DOMAIN FAMILY MEMBER 1A"/>
    <property type="match status" value="1"/>
</dbReference>
<dbReference type="PANTHER" id="PTHR12297">
    <property type="entry name" value="HYPOXIA-INDUCBILE GENE 1 HIG1 -RELATED"/>
    <property type="match status" value="1"/>
</dbReference>
<dbReference type="Pfam" id="PF04588">
    <property type="entry name" value="HIG_1_N"/>
    <property type="match status" value="1"/>
</dbReference>
<dbReference type="PROSITE" id="PS51503">
    <property type="entry name" value="HIG1"/>
    <property type="match status" value="1"/>
</dbReference>
<evidence type="ECO:0000250" key="1"/>
<evidence type="ECO:0000255" key="2"/>
<evidence type="ECO:0000255" key="3">
    <source>
        <dbReference type="PROSITE-ProRule" id="PRU00836"/>
    </source>
</evidence>
<evidence type="ECO:0000256" key="4">
    <source>
        <dbReference type="SAM" id="MobiDB-lite"/>
    </source>
</evidence>
<evidence type="ECO:0000305" key="5"/>